<dbReference type="EMBL" id="CP000025">
    <property type="protein sequence ID" value="AAW35715.1"/>
    <property type="molecule type" value="Genomic_DNA"/>
</dbReference>
<dbReference type="RefSeq" id="WP_011049918.1">
    <property type="nucleotide sequence ID" value="NC_003912.7"/>
</dbReference>
<dbReference type="SMR" id="Q5HTK3"/>
<dbReference type="KEGG" id="cjr:CJE1396"/>
<dbReference type="HOGENOM" id="CLU_017633_0_7_7"/>
<dbReference type="GO" id="GO:0005737">
    <property type="term" value="C:cytoplasm"/>
    <property type="evidence" value="ECO:0007669"/>
    <property type="project" value="UniProtKB-SubCell"/>
</dbReference>
<dbReference type="GO" id="GO:0005524">
    <property type="term" value="F:ATP binding"/>
    <property type="evidence" value="ECO:0007669"/>
    <property type="project" value="InterPro"/>
</dbReference>
<dbReference type="GO" id="GO:0031072">
    <property type="term" value="F:heat shock protein binding"/>
    <property type="evidence" value="ECO:0007669"/>
    <property type="project" value="InterPro"/>
</dbReference>
<dbReference type="GO" id="GO:0051082">
    <property type="term" value="F:unfolded protein binding"/>
    <property type="evidence" value="ECO:0007669"/>
    <property type="project" value="UniProtKB-UniRule"/>
</dbReference>
<dbReference type="GO" id="GO:0008270">
    <property type="term" value="F:zinc ion binding"/>
    <property type="evidence" value="ECO:0007669"/>
    <property type="project" value="UniProtKB-UniRule"/>
</dbReference>
<dbReference type="GO" id="GO:0051085">
    <property type="term" value="P:chaperone cofactor-dependent protein refolding"/>
    <property type="evidence" value="ECO:0007669"/>
    <property type="project" value="TreeGrafter"/>
</dbReference>
<dbReference type="GO" id="GO:0006260">
    <property type="term" value="P:DNA replication"/>
    <property type="evidence" value="ECO:0007669"/>
    <property type="project" value="UniProtKB-KW"/>
</dbReference>
<dbReference type="GO" id="GO:0042026">
    <property type="term" value="P:protein refolding"/>
    <property type="evidence" value="ECO:0007669"/>
    <property type="project" value="TreeGrafter"/>
</dbReference>
<dbReference type="GO" id="GO:0009408">
    <property type="term" value="P:response to heat"/>
    <property type="evidence" value="ECO:0007669"/>
    <property type="project" value="InterPro"/>
</dbReference>
<dbReference type="CDD" id="cd06257">
    <property type="entry name" value="DnaJ"/>
    <property type="match status" value="1"/>
</dbReference>
<dbReference type="CDD" id="cd10747">
    <property type="entry name" value="DnaJ_C"/>
    <property type="match status" value="1"/>
</dbReference>
<dbReference type="CDD" id="cd10719">
    <property type="entry name" value="DnaJ_zf"/>
    <property type="match status" value="1"/>
</dbReference>
<dbReference type="FunFam" id="1.10.287.110:FF:000034">
    <property type="entry name" value="Chaperone protein DnaJ"/>
    <property type="match status" value="1"/>
</dbReference>
<dbReference type="FunFam" id="2.60.260.20:FF:000055">
    <property type="entry name" value="Chaperone protein DnaJ"/>
    <property type="match status" value="1"/>
</dbReference>
<dbReference type="FunFam" id="2.10.230.10:FF:000002">
    <property type="entry name" value="Molecular chaperone DnaJ"/>
    <property type="match status" value="1"/>
</dbReference>
<dbReference type="Gene3D" id="1.10.287.110">
    <property type="entry name" value="DnaJ domain"/>
    <property type="match status" value="1"/>
</dbReference>
<dbReference type="Gene3D" id="2.10.230.10">
    <property type="entry name" value="Heat shock protein DnaJ, cysteine-rich domain"/>
    <property type="match status" value="1"/>
</dbReference>
<dbReference type="Gene3D" id="2.60.260.20">
    <property type="entry name" value="Urease metallochaperone UreE, N-terminal domain"/>
    <property type="match status" value="2"/>
</dbReference>
<dbReference type="HAMAP" id="MF_01152">
    <property type="entry name" value="DnaJ"/>
    <property type="match status" value="1"/>
</dbReference>
<dbReference type="InterPro" id="IPR012724">
    <property type="entry name" value="DnaJ"/>
</dbReference>
<dbReference type="InterPro" id="IPR002939">
    <property type="entry name" value="DnaJ_C"/>
</dbReference>
<dbReference type="InterPro" id="IPR001623">
    <property type="entry name" value="DnaJ_domain"/>
</dbReference>
<dbReference type="InterPro" id="IPR018253">
    <property type="entry name" value="DnaJ_domain_CS"/>
</dbReference>
<dbReference type="InterPro" id="IPR008971">
    <property type="entry name" value="HSP40/DnaJ_pept-bd"/>
</dbReference>
<dbReference type="InterPro" id="IPR001305">
    <property type="entry name" value="HSP_DnaJ_Cys-rich_dom"/>
</dbReference>
<dbReference type="InterPro" id="IPR036410">
    <property type="entry name" value="HSP_DnaJ_Cys-rich_dom_sf"/>
</dbReference>
<dbReference type="InterPro" id="IPR036869">
    <property type="entry name" value="J_dom_sf"/>
</dbReference>
<dbReference type="NCBIfam" id="TIGR02349">
    <property type="entry name" value="DnaJ_bact"/>
    <property type="match status" value="1"/>
</dbReference>
<dbReference type="NCBIfam" id="NF008035">
    <property type="entry name" value="PRK10767.1"/>
    <property type="match status" value="1"/>
</dbReference>
<dbReference type="PANTHER" id="PTHR43096:SF48">
    <property type="entry name" value="CHAPERONE PROTEIN DNAJ"/>
    <property type="match status" value="1"/>
</dbReference>
<dbReference type="PANTHER" id="PTHR43096">
    <property type="entry name" value="DNAJ HOMOLOG 1, MITOCHONDRIAL-RELATED"/>
    <property type="match status" value="1"/>
</dbReference>
<dbReference type="Pfam" id="PF00226">
    <property type="entry name" value="DnaJ"/>
    <property type="match status" value="1"/>
</dbReference>
<dbReference type="Pfam" id="PF01556">
    <property type="entry name" value="DnaJ_C"/>
    <property type="match status" value="1"/>
</dbReference>
<dbReference type="Pfam" id="PF00684">
    <property type="entry name" value="DnaJ_CXXCXGXG"/>
    <property type="match status" value="1"/>
</dbReference>
<dbReference type="PRINTS" id="PR00625">
    <property type="entry name" value="JDOMAIN"/>
</dbReference>
<dbReference type="SMART" id="SM00271">
    <property type="entry name" value="DnaJ"/>
    <property type="match status" value="1"/>
</dbReference>
<dbReference type="SUPFAM" id="SSF46565">
    <property type="entry name" value="Chaperone J-domain"/>
    <property type="match status" value="1"/>
</dbReference>
<dbReference type="SUPFAM" id="SSF57938">
    <property type="entry name" value="DnaJ/Hsp40 cysteine-rich domain"/>
    <property type="match status" value="1"/>
</dbReference>
<dbReference type="SUPFAM" id="SSF49493">
    <property type="entry name" value="HSP40/DnaJ peptide-binding domain"/>
    <property type="match status" value="2"/>
</dbReference>
<dbReference type="PROSITE" id="PS00636">
    <property type="entry name" value="DNAJ_1"/>
    <property type="match status" value="1"/>
</dbReference>
<dbReference type="PROSITE" id="PS50076">
    <property type="entry name" value="DNAJ_2"/>
    <property type="match status" value="1"/>
</dbReference>
<dbReference type="PROSITE" id="PS51188">
    <property type="entry name" value="ZF_CR"/>
    <property type="match status" value="1"/>
</dbReference>
<gene>
    <name evidence="1" type="primary">dnaJ</name>
    <name type="ordered locus">CJE1396</name>
</gene>
<reference key="1">
    <citation type="journal article" date="2005" name="PLoS Biol.">
        <title>Major structural differences and novel potential virulence mechanisms from the genomes of multiple Campylobacter species.</title>
        <authorList>
            <person name="Fouts D.E."/>
            <person name="Mongodin E.F."/>
            <person name="Mandrell R.E."/>
            <person name="Miller W.G."/>
            <person name="Rasko D.A."/>
            <person name="Ravel J."/>
            <person name="Brinkac L.M."/>
            <person name="DeBoy R.T."/>
            <person name="Parker C.T."/>
            <person name="Daugherty S.C."/>
            <person name="Dodson R.J."/>
            <person name="Durkin A.S."/>
            <person name="Madupu R."/>
            <person name="Sullivan S.A."/>
            <person name="Shetty J.U."/>
            <person name="Ayodeji M.A."/>
            <person name="Shvartsbeyn A."/>
            <person name="Schatz M.C."/>
            <person name="Badger J.H."/>
            <person name="Fraser C.M."/>
            <person name="Nelson K.E."/>
        </authorList>
    </citation>
    <scope>NUCLEOTIDE SEQUENCE [LARGE SCALE GENOMIC DNA]</scope>
    <source>
        <strain>RM1221</strain>
    </source>
</reference>
<organism>
    <name type="scientific">Campylobacter jejuni (strain RM1221)</name>
    <dbReference type="NCBI Taxonomy" id="195099"/>
    <lineage>
        <taxon>Bacteria</taxon>
        <taxon>Pseudomonadati</taxon>
        <taxon>Campylobacterota</taxon>
        <taxon>Epsilonproteobacteria</taxon>
        <taxon>Campylobacterales</taxon>
        <taxon>Campylobacteraceae</taxon>
        <taxon>Campylobacter</taxon>
    </lineage>
</organism>
<evidence type="ECO:0000255" key="1">
    <source>
        <dbReference type="HAMAP-Rule" id="MF_01152"/>
    </source>
</evidence>
<proteinExistence type="inferred from homology"/>
<keyword id="KW-0143">Chaperone</keyword>
<keyword id="KW-0963">Cytoplasm</keyword>
<keyword id="KW-0235">DNA replication</keyword>
<keyword id="KW-0479">Metal-binding</keyword>
<keyword id="KW-0677">Repeat</keyword>
<keyword id="KW-0346">Stress response</keyword>
<keyword id="KW-0862">Zinc</keyword>
<keyword id="KW-0863">Zinc-finger</keyword>
<name>DNAJ_CAMJR</name>
<protein>
    <recommendedName>
        <fullName evidence="1">Chaperone protein DnaJ</fullName>
    </recommendedName>
</protein>
<feature type="chain" id="PRO_0000070752" description="Chaperone protein DnaJ">
    <location>
        <begin position="1"/>
        <end position="373"/>
    </location>
</feature>
<feature type="domain" description="J" evidence="1">
    <location>
        <begin position="4"/>
        <end position="69"/>
    </location>
</feature>
<feature type="repeat" description="CXXCXGXG motif">
    <location>
        <begin position="148"/>
        <end position="155"/>
    </location>
</feature>
<feature type="repeat" description="CXXCXGXG motif">
    <location>
        <begin position="164"/>
        <end position="171"/>
    </location>
</feature>
<feature type="repeat" description="CXXCXGXG motif">
    <location>
        <begin position="186"/>
        <end position="193"/>
    </location>
</feature>
<feature type="repeat" description="CXXCXGXG motif">
    <location>
        <begin position="200"/>
        <end position="207"/>
    </location>
</feature>
<feature type="zinc finger region" description="CR-type" evidence="1">
    <location>
        <begin position="135"/>
        <end position="212"/>
    </location>
</feature>
<feature type="binding site" evidence="1">
    <location>
        <position position="148"/>
    </location>
    <ligand>
        <name>Zn(2+)</name>
        <dbReference type="ChEBI" id="CHEBI:29105"/>
        <label>1</label>
    </ligand>
</feature>
<feature type="binding site" evidence="1">
    <location>
        <position position="151"/>
    </location>
    <ligand>
        <name>Zn(2+)</name>
        <dbReference type="ChEBI" id="CHEBI:29105"/>
        <label>1</label>
    </ligand>
</feature>
<feature type="binding site" evidence="1">
    <location>
        <position position="164"/>
    </location>
    <ligand>
        <name>Zn(2+)</name>
        <dbReference type="ChEBI" id="CHEBI:29105"/>
        <label>2</label>
    </ligand>
</feature>
<feature type="binding site" evidence="1">
    <location>
        <position position="167"/>
    </location>
    <ligand>
        <name>Zn(2+)</name>
        <dbReference type="ChEBI" id="CHEBI:29105"/>
        <label>2</label>
    </ligand>
</feature>
<feature type="binding site" evidence="1">
    <location>
        <position position="186"/>
    </location>
    <ligand>
        <name>Zn(2+)</name>
        <dbReference type="ChEBI" id="CHEBI:29105"/>
        <label>2</label>
    </ligand>
</feature>
<feature type="binding site" evidence="1">
    <location>
        <position position="189"/>
    </location>
    <ligand>
        <name>Zn(2+)</name>
        <dbReference type="ChEBI" id="CHEBI:29105"/>
        <label>2</label>
    </ligand>
</feature>
<feature type="binding site" evidence="1">
    <location>
        <position position="200"/>
    </location>
    <ligand>
        <name>Zn(2+)</name>
        <dbReference type="ChEBI" id="CHEBI:29105"/>
        <label>1</label>
    </ligand>
</feature>
<feature type="binding site" evidence="1">
    <location>
        <position position="203"/>
    </location>
    <ligand>
        <name>Zn(2+)</name>
        <dbReference type="ChEBI" id="CHEBI:29105"/>
        <label>1</label>
    </ligand>
</feature>
<accession>Q5HTK3</accession>
<comment type="function">
    <text evidence="1">Participates actively in the response to hyperosmotic and heat shock by preventing the aggregation of stress-denatured proteins and by disaggregating proteins, also in an autonomous, DnaK-independent fashion. Unfolded proteins bind initially to DnaJ; upon interaction with the DnaJ-bound protein, DnaK hydrolyzes its bound ATP, resulting in the formation of a stable complex. GrpE releases ADP from DnaK; ATP binding to DnaK triggers the release of the substrate protein, thus completing the reaction cycle. Several rounds of ATP-dependent interactions between DnaJ, DnaK and GrpE are required for fully efficient folding. Also involved, together with DnaK and GrpE, in the DNA replication of plasmids through activation of initiation proteins.</text>
</comment>
<comment type="cofactor">
    <cofactor evidence="1">
        <name>Zn(2+)</name>
        <dbReference type="ChEBI" id="CHEBI:29105"/>
    </cofactor>
    <text evidence="1">Binds 2 Zn(2+) ions per monomer.</text>
</comment>
<comment type="subunit">
    <text evidence="1">Homodimer.</text>
</comment>
<comment type="subcellular location">
    <subcellularLocation>
        <location evidence="1">Cytoplasm</location>
    </subcellularLocation>
</comment>
<comment type="domain">
    <text evidence="1">The J domain is necessary and sufficient to stimulate DnaK ATPase activity. Zinc center 1 plays an important role in the autonomous, DnaK-independent chaperone activity of DnaJ. Zinc center 2 is essential for interaction with DnaK and for DnaJ activity.</text>
</comment>
<comment type="similarity">
    <text evidence="1">Belongs to the DnaJ family.</text>
</comment>
<sequence length="373" mass="41474">MEISYYEILEITQNADKETIKKAYRKMALKYHPDRNQGDKEAEDKFKLVNEAYEVLSNDEKRAIYDRYGKDALKGGGFGSSSSGFGGFEDLGDIFSSFFGEGFGSSRRRKSSNDEKIPSDFIVNLKLSFKEAVFGCKKNIDFTYKCSCKTCNGTGAKDGKLQTCPKCQGRGQVGVSQGFITFAQTCPDCQGIGEKASEKCSDCKGLGYNESKNSVELNIPEGVDTGMKLRVNAKGNILKNGTRGDMYVKIIAAEDDTFIRDDDDIYIEFPVFFTQAILGESIKVPTIRGEATLNLPKGAKDGQRFVLEKEGVKDVHSSRIGNQIVQISIKFPTSLNDEQKELLEKLSESFGIKDGMHQEQKGLFEKIANWFKS</sequence>